<protein>
    <recommendedName>
        <fullName>Uncharacterized protein MJ0995</fullName>
    </recommendedName>
</protein>
<proteinExistence type="predicted"/>
<reference key="1">
    <citation type="journal article" date="1996" name="Science">
        <title>Complete genome sequence of the methanogenic archaeon, Methanococcus jannaschii.</title>
        <authorList>
            <person name="Bult C.J."/>
            <person name="White O."/>
            <person name="Olsen G.J."/>
            <person name="Zhou L."/>
            <person name="Fleischmann R.D."/>
            <person name="Sutton G.G."/>
            <person name="Blake J.A."/>
            <person name="FitzGerald L.M."/>
            <person name="Clayton R.A."/>
            <person name="Gocayne J.D."/>
            <person name="Kerlavage A.R."/>
            <person name="Dougherty B.A."/>
            <person name="Tomb J.-F."/>
            <person name="Adams M.D."/>
            <person name="Reich C.I."/>
            <person name="Overbeek R."/>
            <person name="Kirkness E.F."/>
            <person name="Weinstock K.G."/>
            <person name="Merrick J.M."/>
            <person name="Glodek A."/>
            <person name="Scott J.L."/>
            <person name="Geoghagen N.S.M."/>
            <person name="Weidman J.F."/>
            <person name="Fuhrmann J.L."/>
            <person name="Nguyen D."/>
            <person name="Utterback T.R."/>
            <person name="Kelley J.M."/>
            <person name="Peterson J.D."/>
            <person name="Sadow P.W."/>
            <person name="Hanna M.C."/>
            <person name="Cotton M.D."/>
            <person name="Roberts K.M."/>
            <person name="Hurst M.A."/>
            <person name="Kaine B.P."/>
            <person name="Borodovsky M."/>
            <person name="Klenk H.-P."/>
            <person name="Fraser C.M."/>
            <person name="Smith H.O."/>
            <person name="Woese C.R."/>
            <person name="Venter J.C."/>
        </authorList>
    </citation>
    <scope>NUCLEOTIDE SEQUENCE [LARGE SCALE GENOMIC DNA]</scope>
    <source>
        <strain>ATCC 43067 / DSM 2661 / JAL-1 / JCM 10045 / NBRC 100440</strain>
    </source>
</reference>
<name>Y995_METJA</name>
<organism>
    <name type="scientific">Methanocaldococcus jannaschii (strain ATCC 43067 / DSM 2661 / JAL-1 / JCM 10045 / NBRC 100440)</name>
    <name type="common">Methanococcus jannaschii</name>
    <dbReference type="NCBI Taxonomy" id="243232"/>
    <lineage>
        <taxon>Archaea</taxon>
        <taxon>Methanobacteriati</taxon>
        <taxon>Methanobacteriota</taxon>
        <taxon>Methanomada group</taxon>
        <taxon>Methanococci</taxon>
        <taxon>Methanococcales</taxon>
        <taxon>Methanocaldococcaceae</taxon>
        <taxon>Methanocaldococcus</taxon>
    </lineage>
</organism>
<sequence>MYGDYMKYMKKIVLFLIINILPILILGLYLYANIGGAEDVKEVIENSPFKEFTYIDHKTLMMLKNDVNLKNMPEFYKESIILINGIYIGNHGSFGIKIPLGFLIKYIPIDNFKYYNGVLIKNLNEDDLGKAEMNDLVNTIPPNYKDVLIYRENYTIGIYYDLNSNKTYLIEVFRKPNNQEIDTEKLRNELLQKTNAVDCNVVDMGDKVYVYLEFNGIDLNLINNGIT</sequence>
<dbReference type="EMBL" id="L77117">
    <property type="protein sequence ID" value="AAB99000.1"/>
    <property type="molecule type" value="Genomic_DNA"/>
</dbReference>
<dbReference type="PIR" id="C64424">
    <property type="entry name" value="C64424"/>
</dbReference>
<dbReference type="FunCoup" id="Q58402">
    <property type="interactions" value="2"/>
</dbReference>
<dbReference type="STRING" id="243232.MJ_0995"/>
<dbReference type="PaxDb" id="243232-MJ_0995"/>
<dbReference type="EnsemblBacteria" id="AAB99000">
    <property type="protein sequence ID" value="AAB99000"/>
    <property type="gene ID" value="MJ_0995"/>
</dbReference>
<dbReference type="KEGG" id="mja:MJ_0995"/>
<dbReference type="eggNOG" id="arCOG06579">
    <property type="taxonomic scope" value="Archaea"/>
</dbReference>
<dbReference type="HOGENOM" id="CLU_1264574_0_0_2"/>
<dbReference type="InParanoid" id="Q58402"/>
<dbReference type="OrthoDB" id="65613at2157"/>
<dbReference type="Proteomes" id="UP000000805">
    <property type="component" value="Chromosome"/>
</dbReference>
<dbReference type="GO" id="GO:0005886">
    <property type="term" value="C:plasma membrane"/>
    <property type="evidence" value="ECO:0007669"/>
    <property type="project" value="UniProtKB-SubCell"/>
</dbReference>
<comment type="subcellular location">
    <subcellularLocation>
        <location evidence="2">Cell membrane</location>
        <topology evidence="2">Multi-pass membrane protein</topology>
    </subcellularLocation>
</comment>
<accession>Q58402</accession>
<gene>
    <name type="ordered locus">MJ0995</name>
</gene>
<evidence type="ECO:0000255" key="1"/>
<evidence type="ECO:0000305" key="2"/>
<keyword id="KW-1003">Cell membrane</keyword>
<keyword id="KW-0472">Membrane</keyword>
<keyword id="KW-1185">Reference proteome</keyword>
<keyword id="KW-0812">Transmembrane</keyword>
<keyword id="KW-1133">Transmembrane helix</keyword>
<feature type="chain" id="PRO_0000107136" description="Uncharacterized protein MJ0995">
    <location>
        <begin position="1"/>
        <end position="227"/>
    </location>
</feature>
<feature type="transmembrane region" description="Helical" evidence="1">
    <location>
        <begin position="12"/>
        <end position="32"/>
    </location>
</feature>
<feature type="transmembrane region" description="Helical" evidence="1">
    <location>
        <begin position="80"/>
        <end position="100"/>
    </location>
</feature>